<evidence type="ECO:0000255" key="1">
    <source>
        <dbReference type="HAMAP-Rule" id="MF_01024"/>
    </source>
</evidence>
<sequence length="431" mass="46127">MRTVVWQSLSEAQQESILERPAITEGANITAAVAQVIAKVRSEGDAALFELTEKFDRVKPASLRVSREEMDAAAARLSETMKQALEQAYNNISKFHKAQKAQPIKVETMPGVVCEQVTRPINKVGLYIPGGSAPLPSTVLMLGVPAQIAGCRKVVLCSPPPIADEILYVAKLCNIDEVYNLGGGQAIAAMAYGTETVTKVDKIFGPGNAYVTEAKRQVSNDFRGAAIDMPAGPSEVLVIADETADANFIAADLLSQAEHGPDSQVVLVTPSPVLADQVTDAVQKQLKVLSRASIAEKALASSLIIIAESLTQAVSISNYYGPEHLIVQTRNPRELVPLLDNAGSIFLGDWSPESVGDYASGTNHVLPTYGYTRTYSSLGLADFSKRMTVQELTADGLQLLAPTVVTMAEAEGLDAHKRAVTIRVEKLQKAQ</sequence>
<keyword id="KW-0028">Amino-acid biosynthesis</keyword>
<keyword id="KW-0368">Histidine biosynthesis</keyword>
<keyword id="KW-0479">Metal-binding</keyword>
<keyword id="KW-0520">NAD</keyword>
<keyword id="KW-0560">Oxidoreductase</keyword>
<keyword id="KW-1185">Reference proteome</keyword>
<keyword id="KW-0862">Zinc</keyword>
<comment type="function">
    <text evidence="1">Catalyzes the sequential NAD-dependent oxidations of L-histidinol to L-histidinaldehyde and then to L-histidine.</text>
</comment>
<comment type="catalytic activity">
    <reaction evidence="1">
        <text>L-histidinol + 2 NAD(+) + H2O = L-histidine + 2 NADH + 3 H(+)</text>
        <dbReference type="Rhea" id="RHEA:20641"/>
        <dbReference type="ChEBI" id="CHEBI:15377"/>
        <dbReference type="ChEBI" id="CHEBI:15378"/>
        <dbReference type="ChEBI" id="CHEBI:57540"/>
        <dbReference type="ChEBI" id="CHEBI:57595"/>
        <dbReference type="ChEBI" id="CHEBI:57699"/>
        <dbReference type="ChEBI" id="CHEBI:57945"/>
        <dbReference type="EC" id="1.1.1.23"/>
    </reaction>
</comment>
<comment type="cofactor">
    <cofactor evidence="1">
        <name>Zn(2+)</name>
        <dbReference type="ChEBI" id="CHEBI:29105"/>
    </cofactor>
    <text evidence="1">Binds 1 zinc ion per subunit.</text>
</comment>
<comment type="pathway">
    <text evidence="1">Amino-acid biosynthesis; L-histidine biosynthesis; L-histidine from 5-phospho-alpha-D-ribose 1-diphosphate: step 9/9.</text>
</comment>
<comment type="similarity">
    <text evidence="1">Belongs to the histidinol dehydrogenase family.</text>
</comment>
<feature type="chain" id="PRO_0000135874" description="Histidinol dehydrogenase">
    <location>
        <begin position="1"/>
        <end position="431"/>
    </location>
</feature>
<feature type="active site" description="Proton acceptor" evidence="1">
    <location>
        <position position="323"/>
    </location>
</feature>
<feature type="active site" description="Proton acceptor" evidence="1">
    <location>
        <position position="324"/>
    </location>
</feature>
<feature type="binding site" evidence="1">
    <location>
        <position position="127"/>
    </location>
    <ligand>
        <name>NAD(+)</name>
        <dbReference type="ChEBI" id="CHEBI:57540"/>
    </ligand>
</feature>
<feature type="binding site" evidence="1">
    <location>
        <position position="185"/>
    </location>
    <ligand>
        <name>NAD(+)</name>
        <dbReference type="ChEBI" id="CHEBI:57540"/>
    </ligand>
</feature>
<feature type="binding site" evidence="1">
    <location>
        <position position="208"/>
    </location>
    <ligand>
        <name>NAD(+)</name>
        <dbReference type="ChEBI" id="CHEBI:57540"/>
    </ligand>
</feature>
<feature type="binding site" evidence="1">
    <location>
        <position position="234"/>
    </location>
    <ligand>
        <name>substrate</name>
    </ligand>
</feature>
<feature type="binding site" evidence="1">
    <location>
        <position position="256"/>
    </location>
    <ligand>
        <name>substrate</name>
    </ligand>
</feature>
<feature type="binding site" evidence="1">
    <location>
        <position position="256"/>
    </location>
    <ligand>
        <name>Zn(2+)</name>
        <dbReference type="ChEBI" id="CHEBI:29105"/>
    </ligand>
</feature>
<feature type="binding site" evidence="1">
    <location>
        <position position="259"/>
    </location>
    <ligand>
        <name>substrate</name>
    </ligand>
</feature>
<feature type="binding site" evidence="1">
    <location>
        <position position="259"/>
    </location>
    <ligand>
        <name>Zn(2+)</name>
        <dbReference type="ChEBI" id="CHEBI:29105"/>
    </ligand>
</feature>
<feature type="binding site" evidence="1">
    <location>
        <position position="324"/>
    </location>
    <ligand>
        <name>substrate</name>
    </ligand>
</feature>
<feature type="binding site" evidence="1">
    <location>
        <position position="357"/>
    </location>
    <ligand>
        <name>substrate</name>
    </ligand>
</feature>
<feature type="binding site" evidence="1">
    <location>
        <position position="357"/>
    </location>
    <ligand>
        <name>Zn(2+)</name>
        <dbReference type="ChEBI" id="CHEBI:29105"/>
    </ligand>
</feature>
<feature type="binding site" evidence="1">
    <location>
        <position position="411"/>
    </location>
    <ligand>
        <name>substrate</name>
    </ligand>
</feature>
<feature type="binding site" evidence="1">
    <location>
        <position position="416"/>
    </location>
    <ligand>
        <name>substrate</name>
    </ligand>
</feature>
<feature type="binding site" evidence="1">
    <location>
        <position position="416"/>
    </location>
    <ligand>
        <name>Zn(2+)</name>
        <dbReference type="ChEBI" id="CHEBI:29105"/>
    </ligand>
</feature>
<gene>
    <name evidence="1" type="primary">hisD</name>
    <name type="ordered locus">VC_1133</name>
</gene>
<protein>
    <recommendedName>
        <fullName evidence="1">Histidinol dehydrogenase</fullName>
        <shortName evidence="1">HDH</shortName>
        <ecNumber evidence="1">1.1.1.23</ecNumber>
    </recommendedName>
</protein>
<dbReference type="EC" id="1.1.1.23" evidence="1"/>
<dbReference type="EMBL" id="AE003852">
    <property type="protein sequence ID" value="AAF94292.1"/>
    <property type="molecule type" value="Genomic_DNA"/>
</dbReference>
<dbReference type="EMBL" id="AF261153">
    <property type="protein sequence ID" value="AAG16130.1"/>
    <property type="molecule type" value="Genomic_DNA"/>
</dbReference>
<dbReference type="PIR" id="H82237">
    <property type="entry name" value="H82237"/>
</dbReference>
<dbReference type="RefSeq" id="NP_230778.1">
    <property type="nucleotide sequence ID" value="NC_002505.1"/>
</dbReference>
<dbReference type="RefSeq" id="WP_001261310.1">
    <property type="nucleotide sequence ID" value="NZ_LT906614.1"/>
</dbReference>
<dbReference type="SMR" id="Q9F854"/>
<dbReference type="STRING" id="243277.VC_1133"/>
<dbReference type="DNASU" id="2614403"/>
<dbReference type="EnsemblBacteria" id="AAF94292">
    <property type="protein sequence ID" value="AAF94292"/>
    <property type="gene ID" value="VC_1133"/>
</dbReference>
<dbReference type="KEGG" id="vch:VC_1133"/>
<dbReference type="PATRIC" id="fig|243277.26.peg.1082"/>
<dbReference type="eggNOG" id="COG0141">
    <property type="taxonomic scope" value="Bacteria"/>
</dbReference>
<dbReference type="HOGENOM" id="CLU_006732_3_0_6"/>
<dbReference type="UniPathway" id="UPA00031">
    <property type="reaction ID" value="UER00014"/>
</dbReference>
<dbReference type="Proteomes" id="UP000000584">
    <property type="component" value="Chromosome 1"/>
</dbReference>
<dbReference type="GO" id="GO:0005737">
    <property type="term" value="C:cytoplasm"/>
    <property type="evidence" value="ECO:0000318"/>
    <property type="project" value="GO_Central"/>
</dbReference>
<dbReference type="GO" id="GO:0005829">
    <property type="term" value="C:cytosol"/>
    <property type="evidence" value="ECO:0000318"/>
    <property type="project" value="GO_Central"/>
</dbReference>
<dbReference type="GO" id="GO:0004399">
    <property type="term" value="F:histidinol dehydrogenase activity"/>
    <property type="evidence" value="ECO:0000318"/>
    <property type="project" value="GO_Central"/>
</dbReference>
<dbReference type="GO" id="GO:0051287">
    <property type="term" value="F:NAD binding"/>
    <property type="evidence" value="ECO:0007669"/>
    <property type="project" value="InterPro"/>
</dbReference>
<dbReference type="GO" id="GO:0008270">
    <property type="term" value="F:zinc ion binding"/>
    <property type="evidence" value="ECO:0007669"/>
    <property type="project" value="UniProtKB-UniRule"/>
</dbReference>
<dbReference type="GO" id="GO:0000105">
    <property type="term" value="P:L-histidine biosynthetic process"/>
    <property type="evidence" value="ECO:0000318"/>
    <property type="project" value="GO_Central"/>
</dbReference>
<dbReference type="CDD" id="cd06572">
    <property type="entry name" value="Histidinol_dh"/>
    <property type="match status" value="1"/>
</dbReference>
<dbReference type="FunFam" id="3.40.50.1980:FF:000001">
    <property type="entry name" value="Histidinol dehydrogenase"/>
    <property type="match status" value="1"/>
</dbReference>
<dbReference type="FunFam" id="1.20.5.1300:FF:000002">
    <property type="entry name" value="Histidinol dehydrogenase, chloroplastic"/>
    <property type="match status" value="1"/>
</dbReference>
<dbReference type="FunFam" id="3.40.50.1980:FF:000002">
    <property type="entry name" value="Histidinol dehydrogenase, chloroplastic"/>
    <property type="match status" value="1"/>
</dbReference>
<dbReference type="Gene3D" id="1.20.5.1300">
    <property type="match status" value="1"/>
</dbReference>
<dbReference type="Gene3D" id="3.40.50.1980">
    <property type="entry name" value="Nitrogenase molybdenum iron protein domain"/>
    <property type="match status" value="2"/>
</dbReference>
<dbReference type="HAMAP" id="MF_01024">
    <property type="entry name" value="HisD"/>
    <property type="match status" value="1"/>
</dbReference>
<dbReference type="InterPro" id="IPR016161">
    <property type="entry name" value="Ald_DH/histidinol_DH"/>
</dbReference>
<dbReference type="InterPro" id="IPR001692">
    <property type="entry name" value="Histidinol_DH_CS"/>
</dbReference>
<dbReference type="InterPro" id="IPR022695">
    <property type="entry name" value="Histidinol_DH_monofunct"/>
</dbReference>
<dbReference type="InterPro" id="IPR012131">
    <property type="entry name" value="Hstdl_DH"/>
</dbReference>
<dbReference type="NCBIfam" id="TIGR00069">
    <property type="entry name" value="hisD"/>
    <property type="match status" value="1"/>
</dbReference>
<dbReference type="PANTHER" id="PTHR21256:SF2">
    <property type="entry name" value="HISTIDINE BIOSYNTHESIS TRIFUNCTIONAL PROTEIN"/>
    <property type="match status" value="1"/>
</dbReference>
<dbReference type="PANTHER" id="PTHR21256">
    <property type="entry name" value="HISTIDINOL DEHYDROGENASE HDH"/>
    <property type="match status" value="1"/>
</dbReference>
<dbReference type="Pfam" id="PF00815">
    <property type="entry name" value="Histidinol_dh"/>
    <property type="match status" value="1"/>
</dbReference>
<dbReference type="PIRSF" id="PIRSF000099">
    <property type="entry name" value="Histidinol_dh"/>
    <property type="match status" value="1"/>
</dbReference>
<dbReference type="PRINTS" id="PR00083">
    <property type="entry name" value="HOLDHDRGNASE"/>
</dbReference>
<dbReference type="SUPFAM" id="SSF53720">
    <property type="entry name" value="ALDH-like"/>
    <property type="match status" value="1"/>
</dbReference>
<dbReference type="PROSITE" id="PS00611">
    <property type="entry name" value="HISOL_DEHYDROGENASE"/>
    <property type="match status" value="1"/>
</dbReference>
<reference key="1">
    <citation type="journal article" date="2000" name="Nature">
        <title>DNA sequence of both chromosomes of the cholera pathogen Vibrio cholerae.</title>
        <authorList>
            <person name="Heidelberg J.F."/>
            <person name="Eisen J.A."/>
            <person name="Nelson W.C."/>
            <person name="Clayton R.A."/>
            <person name="Gwinn M.L."/>
            <person name="Dodson R.J."/>
            <person name="Haft D.H."/>
            <person name="Hickey E.K."/>
            <person name="Peterson J.D."/>
            <person name="Umayam L.A."/>
            <person name="Gill S.R."/>
            <person name="Nelson K.E."/>
            <person name="Read T.D."/>
            <person name="Tettelin H."/>
            <person name="Richardson D.L."/>
            <person name="Ermolaeva M.D."/>
            <person name="Vamathevan J.J."/>
            <person name="Bass S."/>
            <person name="Qin H."/>
            <person name="Dragoi I."/>
            <person name="Sellers P."/>
            <person name="McDonald L.A."/>
            <person name="Utterback T.R."/>
            <person name="Fleischmann R.D."/>
            <person name="Nierman W.C."/>
            <person name="White O."/>
            <person name="Salzberg S.L."/>
            <person name="Smith H.O."/>
            <person name="Colwell R.R."/>
            <person name="Mekalanos J.J."/>
            <person name="Venter J.C."/>
            <person name="Fraser C.M."/>
        </authorList>
    </citation>
    <scope>NUCLEOTIDE SEQUENCE [LARGE SCALE GENOMIC DNA]</scope>
    <source>
        <strain>ATCC 39315 / El Tor Inaba N16961</strain>
    </source>
</reference>
<reference key="2">
    <citation type="submission" date="2000-04" db="EMBL/GenBank/DDBJ databases">
        <authorList>
            <person name="Haralalka S."/>
            <person name="Roychoudhury S."/>
            <person name="Chaudhuri K."/>
        </authorList>
    </citation>
    <scope>NUCLEOTIDE SEQUENCE [GENOMIC DNA] OF 1-337</scope>
    <source>
        <strain>ATCC 25870 / Classical Inaba 569B / Serotype O1</strain>
    </source>
</reference>
<organism>
    <name type="scientific">Vibrio cholerae serotype O1 (strain ATCC 39315 / El Tor Inaba N16961)</name>
    <dbReference type="NCBI Taxonomy" id="243277"/>
    <lineage>
        <taxon>Bacteria</taxon>
        <taxon>Pseudomonadati</taxon>
        <taxon>Pseudomonadota</taxon>
        <taxon>Gammaproteobacteria</taxon>
        <taxon>Vibrionales</taxon>
        <taxon>Vibrionaceae</taxon>
        <taxon>Vibrio</taxon>
    </lineage>
</organism>
<accession>Q9F854</accession>
<accession>Q9KSX3</accession>
<proteinExistence type="inferred from homology"/>
<name>HISX_VIBCH</name>